<organism>
    <name type="scientific">Psychrobacter cryohalolentis (strain ATCC BAA-1226 / DSM 17306 / VKM B-2378 / K5)</name>
    <dbReference type="NCBI Taxonomy" id="335284"/>
    <lineage>
        <taxon>Bacteria</taxon>
        <taxon>Pseudomonadati</taxon>
        <taxon>Pseudomonadota</taxon>
        <taxon>Gammaproteobacteria</taxon>
        <taxon>Moraxellales</taxon>
        <taxon>Moraxellaceae</taxon>
        <taxon>Psychrobacter</taxon>
    </lineage>
</organism>
<gene>
    <name evidence="1" type="primary">pdxB</name>
    <name type="ordered locus">Pcryo_0298</name>
</gene>
<comment type="function">
    <text evidence="1">Catalyzes the oxidation of erythronate-4-phosphate to 3-hydroxy-2-oxo-4-phosphonooxybutanoate.</text>
</comment>
<comment type="catalytic activity">
    <reaction evidence="1">
        <text>4-phospho-D-erythronate + NAD(+) = (R)-3-hydroxy-2-oxo-4-phosphooxybutanoate + NADH + H(+)</text>
        <dbReference type="Rhea" id="RHEA:18829"/>
        <dbReference type="ChEBI" id="CHEBI:15378"/>
        <dbReference type="ChEBI" id="CHEBI:57540"/>
        <dbReference type="ChEBI" id="CHEBI:57945"/>
        <dbReference type="ChEBI" id="CHEBI:58538"/>
        <dbReference type="ChEBI" id="CHEBI:58766"/>
        <dbReference type="EC" id="1.1.1.290"/>
    </reaction>
</comment>
<comment type="pathway">
    <text evidence="1">Cofactor biosynthesis; pyridoxine 5'-phosphate biosynthesis; pyridoxine 5'-phosphate from D-erythrose 4-phosphate: step 2/5.</text>
</comment>
<comment type="subunit">
    <text evidence="1">Homodimer.</text>
</comment>
<comment type="subcellular location">
    <subcellularLocation>
        <location evidence="1">Cytoplasm</location>
    </subcellularLocation>
</comment>
<comment type="similarity">
    <text evidence="1">Belongs to the D-isomer specific 2-hydroxyacid dehydrogenase family. PdxB subfamily.</text>
</comment>
<proteinExistence type="inferred from homology"/>
<dbReference type="EC" id="1.1.1.290" evidence="1"/>
<dbReference type="EMBL" id="CP000323">
    <property type="protein sequence ID" value="ABE74082.1"/>
    <property type="molecule type" value="Genomic_DNA"/>
</dbReference>
<dbReference type="RefSeq" id="WP_011512670.1">
    <property type="nucleotide sequence ID" value="NC_007969.1"/>
</dbReference>
<dbReference type="SMR" id="Q1QE21"/>
<dbReference type="STRING" id="335284.Pcryo_0298"/>
<dbReference type="KEGG" id="pcr:Pcryo_0298"/>
<dbReference type="eggNOG" id="COG0111">
    <property type="taxonomic scope" value="Bacteria"/>
</dbReference>
<dbReference type="HOGENOM" id="CLU_019796_4_0_6"/>
<dbReference type="UniPathway" id="UPA00244">
    <property type="reaction ID" value="UER00310"/>
</dbReference>
<dbReference type="Proteomes" id="UP000002425">
    <property type="component" value="Chromosome"/>
</dbReference>
<dbReference type="GO" id="GO:0005737">
    <property type="term" value="C:cytoplasm"/>
    <property type="evidence" value="ECO:0007669"/>
    <property type="project" value="UniProtKB-SubCell"/>
</dbReference>
<dbReference type="GO" id="GO:0033711">
    <property type="term" value="F:4-phosphoerythronate dehydrogenase activity"/>
    <property type="evidence" value="ECO:0007669"/>
    <property type="project" value="UniProtKB-EC"/>
</dbReference>
<dbReference type="GO" id="GO:0051287">
    <property type="term" value="F:NAD binding"/>
    <property type="evidence" value="ECO:0007669"/>
    <property type="project" value="InterPro"/>
</dbReference>
<dbReference type="GO" id="GO:0046983">
    <property type="term" value="F:protein dimerization activity"/>
    <property type="evidence" value="ECO:0007669"/>
    <property type="project" value="InterPro"/>
</dbReference>
<dbReference type="GO" id="GO:0008615">
    <property type="term" value="P:pyridoxine biosynthetic process"/>
    <property type="evidence" value="ECO:0007669"/>
    <property type="project" value="UniProtKB-UniRule"/>
</dbReference>
<dbReference type="CDD" id="cd12158">
    <property type="entry name" value="ErythrP_dh"/>
    <property type="match status" value="1"/>
</dbReference>
<dbReference type="Gene3D" id="3.30.1370.170">
    <property type="match status" value="1"/>
</dbReference>
<dbReference type="Gene3D" id="3.40.50.720">
    <property type="entry name" value="NAD(P)-binding Rossmann-like Domain"/>
    <property type="match status" value="2"/>
</dbReference>
<dbReference type="HAMAP" id="MF_01825">
    <property type="entry name" value="PdxB"/>
    <property type="match status" value="1"/>
</dbReference>
<dbReference type="InterPro" id="IPR050418">
    <property type="entry name" value="D-iso_2-hydroxyacid_DH_PdxB"/>
</dbReference>
<dbReference type="InterPro" id="IPR006139">
    <property type="entry name" value="D-isomer_2_OHA_DH_cat_dom"/>
</dbReference>
<dbReference type="InterPro" id="IPR029752">
    <property type="entry name" value="D-isomer_DH_CS1"/>
</dbReference>
<dbReference type="InterPro" id="IPR006140">
    <property type="entry name" value="D-isomer_DH_NAD-bd"/>
</dbReference>
<dbReference type="InterPro" id="IPR020921">
    <property type="entry name" value="Erythronate-4-P_DHase"/>
</dbReference>
<dbReference type="InterPro" id="IPR024531">
    <property type="entry name" value="Erythronate-4-P_DHase_dimer"/>
</dbReference>
<dbReference type="InterPro" id="IPR036291">
    <property type="entry name" value="NAD(P)-bd_dom_sf"/>
</dbReference>
<dbReference type="InterPro" id="IPR038251">
    <property type="entry name" value="PdxB_dimer_sf"/>
</dbReference>
<dbReference type="PANTHER" id="PTHR43761:SF1">
    <property type="entry name" value="D-ISOMER SPECIFIC 2-HYDROXYACID DEHYDROGENASE CATALYTIC DOMAIN-CONTAINING PROTEIN-RELATED"/>
    <property type="match status" value="1"/>
</dbReference>
<dbReference type="PANTHER" id="PTHR43761">
    <property type="entry name" value="D-ISOMER SPECIFIC 2-HYDROXYACID DEHYDROGENASE FAMILY PROTEIN (AFU_ORTHOLOGUE AFUA_1G13630)"/>
    <property type="match status" value="1"/>
</dbReference>
<dbReference type="Pfam" id="PF00389">
    <property type="entry name" value="2-Hacid_dh"/>
    <property type="match status" value="1"/>
</dbReference>
<dbReference type="Pfam" id="PF02826">
    <property type="entry name" value="2-Hacid_dh_C"/>
    <property type="match status" value="2"/>
</dbReference>
<dbReference type="Pfam" id="PF11890">
    <property type="entry name" value="DUF3410"/>
    <property type="match status" value="1"/>
</dbReference>
<dbReference type="SUPFAM" id="SSF52283">
    <property type="entry name" value="Formate/glycerate dehydrogenase catalytic domain-like"/>
    <property type="match status" value="1"/>
</dbReference>
<dbReference type="SUPFAM" id="SSF51735">
    <property type="entry name" value="NAD(P)-binding Rossmann-fold domains"/>
    <property type="match status" value="1"/>
</dbReference>
<dbReference type="PROSITE" id="PS00065">
    <property type="entry name" value="D_2_HYDROXYACID_DH_1"/>
    <property type="match status" value="1"/>
</dbReference>
<accession>Q1QE21</accession>
<feature type="chain" id="PRO_0000297458" description="Erythronate-4-phosphate dehydrogenase">
    <location>
        <begin position="1"/>
        <end position="386"/>
    </location>
</feature>
<feature type="active site" evidence="1">
    <location>
        <position position="239"/>
    </location>
</feature>
<feature type="active site" evidence="1">
    <location>
        <position position="267"/>
    </location>
</feature>
<feature type="active site" description="Proton donor" evidence="1">
    <location>
        <position position="284"/>
    </location>
</feature>
<feature type="binding site" evidence="1">
    <location>
        <position position="59"/>
    </location>
    <ligand>
        <name>substrate</name>
    </ligand>
</feature>
<feature type="binding site" evidence="1">
    <location>
        <position position="81"/>
    </location>
    <ligand>
        <name>substrate</name>
    </ligand>
</feature>
<feature type="binding site" evidence="1">
    <location>
        <position position="162"/>
    </location>
    <ligand>
        <name>NAD(+)</name>
        <dbReference type="ChEBI" id="CHEBI:57540"/>
    </ligand>
</feature>
<feature type="binding site" evidence="1">
    <location>
        <position position="262"/>
    </location>
    <ligand>
        <name>NAD(+)</name>
        <dbReference type="ChEBI" id="CHEBI:57540"/>
    </ligand>
</feature>
<feature type="binding site" evidence="1">
    <location>
        <position position="287"/>
    </location>
    <ligand>
        <name>NAD(+)</name>
        <dbReference type="ChEBI" id="CHEBI:57540"/>
    </ligand>
</feature>
<feature type="binding site" evidence="1">
    <location>
        <position position="288"/>
    </location>
    <ligand>
        <name>substrate</name>
    </ligand>
</feature>
<name>PDXB_PSYCK</name>
<evidence type="ECO:0000255" key="1">
    <source>
        <dbReference type="HAMAP-Rule" id="MF_01825"/>
    </source>
</evidence>
<reference key="1">
    <citation type="submission" date="2006-03" db="EMBL/GenBank/DDBJ databases">
        <title>Complete sequence of chromosome of Psychrobacter cryohalolentis K5.</title>
        <authorList>
            <consortium name="US DOE Joint Genome Institute"/>
            <person name="Copeland A."/>
            <person name="Lucas S."/>
            <person name="Lapidus A."/>
            <person name="Barry K."/>
            <person name="Detter J.C."/>
            <person name="Glavina T."/>
            <person name="Hammon N."/>
            <person name="Israni S."/>
            <person name="Dalin E."/>
            <person name="Tice H."/>
            <person name="Pitluck S."/>
            <person name="Brettin T."/>
            <person name="Bruce D."/>
            <person name="Han C."/>
            <person name="Tapia R."/>
            <person name="Sims D.R."/>
            <person name="Gilna P."/>
            <person name="Schmutz J."/>
            <person name="Larimer F."/>
            <person name="Land M."/>
            <person name="Hauser L."/>
            <person name="Kyrpides N."/>
            <person name="Kim E."/>
            <person name="Richardson P."/>
        </authorList>
    </citation>
    <scope>NUCLEOTIDE SEQUENCE [LARGE SCALE GENOMIC DNA]</scope>
    <source>
        <strain>ATCC BAA-1226 / DSM 17306 / VKM B-2378 / K5</strain>
    </source>
</reference>
<keyword id="KW-0963">Cytoplasm</keyword>
<keyword id="KW-0520">NAD</keyword>
<keyword id="KW-0560">Oxidoreductase</keyword>
<keyword id="KW-0664">Pyridoxine biosynthesis</keyword>
<protein>
    <recommendedName>
        <fullName evidence="1">Erythronate-4-phosphate dehydrogenase</fullName>
        <ecNumber evidence="1">1.1.1.290</ecNumber>
    </recommendedName>
</protein>
<sequence length="386" mass="42643">MKNLTIVADSNIASLDEFFNPVALGQNTEQQVQVIRVAGRDINAQLMADVQPDVLLIRSVTSINESLLSDNNSVKFVGSATIGTDHVDQEYLAERNITFANAAGCSKHSVAQYVVTAILTLRPQYWQQSTKPLTVGIIGLGNIGSTLAQYANDLGWKILGYDPLLATSDINNASLEQVLSQSDIVSLHVPLTDKKDTDAQDAVSNSISNNVSDYPTRHLINAETLTLMSPHTMLINSARGPVIDAAALEADIDATERQVVLDVFEHEPQISESLLSKLAIATPHIAGYTLEGKLRGTQIIYDALCEKLAVLPVLSMHQLLPLNTYLWFELKEHPDRLQKFYDIKKDDAALRNKITNGKVKGSDFDQLRRDYHLRREWQAQTISVTI</sequence>